<sequence length="244" mass="26827">MTDLPEKEGGRFHASVLTLYPEMFPGPLGISLAGKALAEGKWQLDTVQIRDFAEGRHRMVDDTPSGGGAGMVMKADVVARALDSVDDGRPMLLMTPRGKPLTQERVRALADGAGAIILCGRFEGVDERVIEGRNLEEISIGDYILSGGETAAIVLLDAVVRLLPGVMGNRESGETESFETGLLEHPHYTRPQEWEGRAIPDILTSGNHGAIDKWRLEQAERITRERRPDLWEAYCKNRRKIGGQ</sequence>
<comment type="function">
    <text evidence="1">Specifically methylates guanosine-37 in various tRNAs.</text>
</comment>
<comment type="catalytic activity">
    <reaction evidence="1">
        <text>guanosine(37) in tRNA + S-adenosyl-L-methionine = N(1)-methylguanosine(37) in tRNA + S-adenosyl-L-homocysteine + H(+)</text>
        <dbReference type="Rhea" id="RHEA:36899"/>
        <dbReference type="Rhea" id="RHEA-COMP:10145"/>
        <dbReference type="Rhea" id="RHEA-COMP:10147"/>
        <dbReference type="ChEBI" id="CHEBI:15378"/>
        <dbReference type="ChEBI" id="CHEBI:57856"/>
        <dbReference type="ChEBI" id="CHEBI:59789"/>
        <dbReference type="ChEBI" id="CHEBI:73542"/>
        <dbReference type="ChEBI" id="CHEBI:74269"/>
        <dbReference type="EC" id="2.1.1.228"/>
    </reaction>
</comment>
<comment type="subunit">
    <text evidence="1">Homodimer.</text>
</comment>
<comment type="subcellular location">
    <subcellularLocation>
        <location evidence="1">Cytoplasm</location>
    </subcellularLocation>
</comment>
<comment type="similarity">
    <text evidence="1">Belongs to the RNA methyltransferase TrmD family.</text>
</comment>
<proteinExistence type="inferred from homology"/>
<feature type="chain" id="PRO_1000082508" description="tRNA (guanine-N(1)-)-methyltransferase">
    <location>
        <begin position="1"/>
        <end position="244"/>
    </location>
</feature>
<feature type="binding site" evidence="1">
    <location>
        <position position="120"/>
    </location>
    <ligand>
        <name>S-adenosyl-L-methionine</name>
        <dbReference type="ChEBI" id="CHEBI:59789"/>
    </ligand>
</feature>
<feature type="binding site" evidence="1">
    <location>
        <begin position="140"/>
        <end position="145"/>
    </location>
    <ligand>
        <name>S-adenosyl-L-methionine</name>
        <dbReference type="ChEBI" id="CHEBI:59789"/>
    </ligand>
</feature>
<organism>
    <name type="scientific">Brucella suis (strain ATCC 23445 / NCTC 10510)</name>
    <dbReference type="NCBI Taxonomy" id="470137"/>
    <lineage>
        <taxon>Bacteria</taxon>
        <taxon>Pseudomonadati</taxon>
        <taxon>Pseudomonadota</taxon>
        <taxon>Alphaproteobacteria</taxon>
        <taxon>Hyphomicrobiales</taxon>
        <taxon>Brucellaceae</taxon>
        <taxon>Brucella/Ochrobactrum group</taxon>
        <taxon>Brucella</taxon>
    </lineage>
</organism>
<dbReference type="EC" id="2.1.1.228" evidence="1"/>
<dbReference type="EMBL" id="CP000911">
    <property type="protein sequence ID" value="ABY38771.1"/>
    <property type="molecule type" value="Genomic_DNA"/>
</dbReference>
<dbReference type="RefSeq" id="WP_002964982.1">
    <property type="nucleotide sequence ID" value="NC_010169.1"/>
</dbReference>
<dbReference type="SMR" id="B0CIR8"/>
<dbReference type="GeneID" id="97534799"/>
<dbReference type="KEGG" id="bmt:BSUIS_A1754"/>
<dbReference type="HOGENOM" id="CLU_047363_0_1_5"/>
<dbReference type="Proteomes" id="UP000008545">
    <property type="component" value="Chromosome I"/>
</dbReference>
<dbReference type="GO" id="GO:0005829">
    <property type="term" value="C:cytosol"/>
    <property type="evidence" value="ECO:0007669"/>
    <property type="project" value="TreeGrafter"/>
</dbReference>
<dbReference type="GO" id="GO:0052906">
    <property type="term" value="F:tRNA (guanine(37)-N1)-methyltransferase activity"/>
    <property type="evidence" value="ECO:0007669"/>
    <property type="project" value="UniProtKB-UniRule"/>
</dbReference>
<dbReference type="GO" id="GO:0002939">
    <property type="term" value="P:tRNA N1-guanine methylation"/>
    <property type="evidence" value="ECO:0007669"/>
    <property type="project" value="TreeGrafter"/>
</dbReference>
<dbReference type="CDD" id="cd18080">
    <property type="entry name" value="TrmD-like"/>
    <property type="match status" value="1"/>
</dbReference>
<dbReference type="Gene3D" id="3.40.1280.10">
    <property type="match status" value="1"/>
</dbReference>
<dbReference type="Gene3D" id="1.10.1270.20">
    <property type="entry name" value="tRNA(m1g37)methyltransferase, domain 2"/>
    <property type="match status" value="1"/>
</dbReference>
<dbReference type="HAMAP" id="MF_00605">
    <property type="entry name" value="TrmD"/>
    <property type="match status" value="1"/>
</dbReference>
<dbReference type="InterPro" id="IPR029028">
    <property type="entry name" value="Alpha/beta_knot_MTases"/>
</dbReference>
<dbReference type="InterPro" id="IPR023148">
    <property type="entry name" value="tRNA_m1G_MeTrfase_C_sf"/>
</dbReference>
<dbReference type="InterPro" id="IPR002649">
    <property type="entry name" value="tRNA_m1G_MeTrfase_TrmD"/>
</dbReference>
<dbReference type="InterPro" id="IPR029026">
    <property type="entry name" value="tRNA_m1G_MTases_N"/>
</dbReference>
<dbReference type="InterPro" id="IPR016009">
    <property type="entry name" value="tRNA_MeTrfase_TRMD/TRM10"/>
</dbReference>
<dbReference type="NCBIfam" id="NF000648">
    <property type="entry name" value="PRK00026.1"/>
    <property type="match status" value="1"/>
</dbReference>
<dbReference type="NCBIfam" id="TIGR00088">
    <property type="entry name" value="trmD"/>
    <property type="match status" value="1"/>
</dbReference>
<dbReference type="PANTHER" id="PTHR46417">
    <property type="entry name" value="TRNA (GUANINE-N(1)-)-METHYLTRANSFERASE"/>
    <property type="match status" value="1"/>
</dbReference>
<dbReference type="PANTHER" id="PTHR46417:SF1">
    <property type="entry name" value="TRNA (GUANINE-N(1)-)-METHYLTRANSFERASE"/>
    <property type="match status" value="1"/>
</dbReference>
<dbReference type="Pfam" id="PF01746">
    <property type="entry name" value="tRNA_m1G_MT"/>
    <property type="match status" value="1"/>
</dbReference>
<dbReference type="PIRSF" id="PIRSF000386">
    <property type="entry name" value="tRNA_mtase"/>
    <property type="match status" value="1"/>
</dbReference>
<dbReference type="SUPFAM" id="SSF75217">
    <property type="entry name" value="alpha/beta knot"/>
    <property type="match status" value="1"/>
</dbReference>
<gene>
    <name evidence="1" type="primary">trmD</name>
    <name type="ordered locus">BSUIS_A1754</name>
</gene>
<name>TRMD_BRUSI</name>
<protein>
    <recommendedName>
        <fullName evidence="1">tRNA (guanine-N(1)-)-methyltransferase</fullName>
        <ecNumber evidence="1">2.1.1.228</ecNumber>
    </recommendedName>
    <alternativeName>
        <fullName evidence="1">M1G-methyltransferase</fullName>
    </alternativeName>
    <alternativeName>
        <fullName evidence="1">tRNA [GM37] methyltransferase</fullName>
    </alternativeName>
</protein>
<keyword id="KW-0963">Cytoplasm</keyword>
<keyword id="KW-0489">Methyltransferase</keyword>
<keyword id="KW-0949">S-adenosyl-L-methionine</keyword>
<keyword id="KW-0808">Transferase</keyword>
<keyword id="KW-0819">tRNA processing</keyword>
<evidence type="ECO:0000255" key="1">
    <source>
        <dbReference type="HAMAP-Rule" id="MF_00605"/>
    </source>
</evidence>
<reference key="1">
    <citation type="submission" date="2007-12" db="EMBL/GenBank/DDBJ databases">
        <title>Brucella suis ATCC 23445 whole genome shotgun sequencing project.</title>
        <authorList>
            <person name="Setubal J.C."/>
            <person name="Bowns C."/>
            <person name="Boyle S."/>
            <person name="Crasta O.R."/>
            <person name="Czar M.J."/>
            <person name="Dharmanolla C."/>
            <person name="Gillespie J.J."/>
            <person name="Kenyon R.W."/>
            <person name="Lu J."/>
            <person name="Mane S."/>
            <person name="Mohapatra S."/>
            <person name="Nagrani S."/>
            <person name="Purkayastha A."/>
            <person name="Rajasimha H.K."/>
            <person name="Shallom J.M."/>
            <person name="Shallom S."/>
            <person name="Shukla M."/>
            <person name="Snyder E.E."/>
            <person name="Sobral B.W."/>
            <person name="Wattam A.R."/>
            <person name="Will R."/>
            <person name="Williams K."/>
            <person name="Yoo H."/>
            <person name="Bruce D."/>
            <person name="Detter C."/>
            <person name="Munk C."/>
            <person name="Brettin T.S."/>
        </authorList>
    </citation>
    <scope>NUCLEOTIDE SEQUENCE [LARGE SCALE GENOMIC DNA]</scope>
    <source>
        <strain>ATCC 23445 / NCTC 10510</strain>
    </source>
</reference>
<accession>B0CIR8</accession>